<accession>Q5I2P0</accession>
<sequence length="69" mass="7943">MLKMGVLLFIFLVLFPLTTLELDTDRPVERHAAIKQDLKPQERRGIRLHAPRDECCEPQWCDGACDCCS</sequence>
<reference key="1">
    <citation type="journal article" date="2006" name="FEBS J.">
        <title>Characterization of novel M-superfamily conotoxins with new disulfide linkage.</title>
        <authorList>
            <person name="Han Y.-H."/>
            <person name="Wang Q."/>
            <person name="Jiang H."/>
            <person name="Liu L."/>
            <person name="Xiao C."/>
            <person name="Yuan D.-D."/>
            <person name="Shao X.-X."/>
            <person name="Dai Q.-Y."/>
            <person name="Cheng J.-S."/>
            <person name="Chi C.-W."/>
        </authorList>
    </citation>
    <scope>NUCLEOTIDE SEQUENCE [MRNA]</scope>
    <source>
        <tissue>Venom duct</tissue>
    </source>
</reference>
<feature type="signal peptide" evidence="2">
    <location>
        <begin position="1"/>
        <end position="20"/>
    </location>
</feature>
<feature type="propeptide" id="PRO_0000289871" evidence="5">
    <location>
        <begin position="21"/>
        <end position="54"/>
    </location>
</feature>
<feature type="peptide" id="PRO_0000289872" description="Conotoxin Lp3.1" evidence="5">
    <location>
        <begin position="55"/>
        <end position="69"/>
    </location>
</feature>
<feature type="disulfide bond" evidence="1">
    <location>
        <begin position="55"/>
        <end position="67"/>
    </location>
</feature>
<feature type="disulfide bond" evidence="1">
    <location>
        <begin position="56"/>
        <end position="65"/>
    </location>
</feature>
<feature type="disulfide bond" evidence="1">
    <location>
        <begin position="61"/>
        <end position="68"/>
    </location>
</feature>
<feature type="sequence variant" description="In Lp3.1b.">
    <original>E</original>
    <variation>G</variation>
    <location>
        <position position="57"/>
    </location>
</feature>
<evidence type="ECO:0000250" key="1">
    <source>
        <dbReference type="UniProtKB" id="Q5EHP3"/>
    </source>
</evidence>
<evidence type="ECO:0000255" key="2"/>
<evidence type="ECO:0000303" key="3">
    <source>
    </source>
</evidence>
<evidence type="ECO:0000305" key="4"/>
<evidence type="ECO:0000305" key="5">
    <source>
    </source>
</evidence>
<keyword id="KW-1015">Disulfide bond</keyword>
<keyword id="KW-0964">Secreted</keyword>
<keyword id="KW-0732">Signal</keyword>
<keyword id="KW-0800">Toxin</keyword>
<organism>
    <name type="scientific">Conus leopardus</name>
    <name type="common">Leopard cone</name>
    <dbReference type="NCBI Taxonomy" id="101306"/>
    <lineage>
        <taxon>Eukaryota</taxon>
        <taxon>Metazoa</taxon>
        <taxon>Spiralia</taxon>
        <taxon>Lophotrochozoa</taxon>
        <taxon>Mollusca</taxon>
        <taxon>Gastropoda</taxon>
        <taxon>Caenogastropoda</taxon>
        <taxon>Neogastropoda</taxon>
        <taxon>Conoidea</taxon>
        <taxon>Conidae</taxon>
        <taxon>Conus</taxon>
        <taxon>Lithoconus</taxon>
    </lineage>
</organism>
<proteinExistence type="inferred from homology"/>
<dbReference type="EMBL" id="AY859496">
    <property type="protein sequence ID" value="AAW51457.1"/>
    <property type="molecule type" value="mRNA"/>
</dbReference>
<dbReference type="ConoServer" id="1058">
    <property type="toxin name" value="Lp3.1 precursor"/>
</dbReference>
<dbReference type="GO" id="GO:0005576">
    <property type="term" value="C:extracellular region"/>
    <property type="evidence" value="ECO:0007669"/>
    <property type="project" value="UniProtKB-SubCell"/>
</dbReference>
<dbReference type="GO" id="GO:0008200">
    <property type="term" value="F:ion channel inhibitor activity"/>
    <property type="evidence" value="ECO:0007669"/>
    <property type="project" value="InterPro"/>
</dbReference>
<dbReference type="GO" id="GO:0090729">
    <property type="term" value="F:toxin activity"/>
    <property type="evidence" value="ECO:0007669"/>
    <property type="project" value="UniProtKB-KW"/>
</dbReference>
<dbReference type="InterPro" id="IPR004214">
    <property type="entry name" value="Conotoxin"/>
</dbReference>
<dbReference type="Pfam" id="PF02950">
    <property type="entry name" value="Conotoxin"/>
    <property type="match status" value="1"/>
</dbReference>
<protein>
    <recommendedName>
        <fullName evidence="3">Conotoxin Lp3.1</fullName>
    </recommendedName>
</protein>
<name>CM31_CONLE</name>
<comment type="subcellular location">
    <subcellularLocation>
        <location evidence="5">Secreted</location>
    </subcellularLocation>
</comment>
<comment type="tissue specificity">
    <text evidence="5">Expressed by the venom duct.</text>
</comment>
<comment type="domain">
    <text evidence="4">The cysteine framework is III (CC-C-C-CC) (Probable). Classified in the M-1 branch, since 1 residue stands between the fourth and the fifth cysteine residues.</text>
</comment>
<comment type="similarity">
    <text evidence="4">Belongs to the conotoxin M superfamily.</text>
</comment>